<comment type="function">
    <text evidence="1">Involved in the synthesis of autoinducer 2 (AI-2) which is secreted by bacteria and is used to communicate both the cell density and the metabolic potential of the environment. The regulation of gene expression in response to changes in cell density is called quorum sensing. Catalyzes the transformation of S-ribosylhomocysteine (RHC) to homocysteine (HC) and 4,5-dihydroxy-2,3-pentadione (DPD).</text>
</comment>
<comment type="catalytic activity">
    <reaction evidence="1">
        <text>S-(5-deoxy-D-ribos-5-yl)-L-homocysteine = (S)-4,5-dihydroxypentane-2,3-dione + L-homocysteine</text>
        <dbReference type="Rhea" id="RHEA:17753"/>
        <dbReference type="ChEBI" id="CHEBI:29484"/>
        <dbReference type="ChEBI" id="CHEBI:58195"/>
        <dbReference type="ChEBI" id="CHEBI:58199"/>
        <dbReference type="EC" id="4.4.1.21"/>
    </reaction>
</comment>
<comment type="cofactor">
    <cofactor evidence="1">
        <name>Fe cation</name>
        <dbReference type="ChEBI" id="CHEBI:24875"/>
    </cofactor>
    <text evidence="1">Binds 1 Fe cation per subunit.</text>
</comment>
<comment type="subunit">
    <text evidence="1">Homodimer.</text>
</comment>
<comment type="similarity">
    <text evidence="1">Belongs to the LuxS family.</text>
</comment>
<dbReference type="EC" id="4.4.1.21" evidence="1"/>
<dbReference type="EMBL" id="CU928145">
    <property type="protein sequence ID" value="CAU98839.1"/>
    <property type="molecule type" value="Genomic_DNA"/>
</dbReference>
<dbReference type="RefSeq" id="WP_001130210.1">
    <property type="nucleotide sequence ID" value="NC_011748.1"/>
</dbReference>
<dbReference type="SMR" id="B7LEA1"/>
<dbReference type="KEGG" id="eck:EC55989_2954"/>
<dbReference type="HOGENOM" id="CLU_107531_2_0_6"/>
<dbReference type="Proteomes" id="UP000000746">
    <property type="component" value="Chromosome"/>
</dbReference>
<dbReference type="GO" id="GO:0005506">
    <property type="term" value="F:iron ion binding"/>
    <property type="evidence" value="ECO:0007669"/>
    <property type="project" value="InterPro"/>
</dbReference>
<dbReference type="GO" id="GO:0043768">
    <property type="term" value="F:S-ribosylhomocysteine lyase activity"/>
    <property type="evidence" value="ECO:0007669"/>
    <property type="project" value="UniProtKB-UniRule"/>
</dbReference>
<dbReference type="GO" id="GO:0009372">
    <property type="term" value="P:quorum sensing"/>
    <property type="evidence" value="ECO:0007669"/>
    <property type="project" value="UniProtKB-UniRule"/>
</dbReference>
<dbReference type="FunFam" id="3.30.1360.80:FF:000001">
    <property type="entry name" value="S-ribosylhomocysteine lyase"/>
    <property type="match status" value="1"/>
</dbReference>
<dbReference type="Gene3D" id="3.30.1360.80">
    <property type="entry name" value="S-ribosylhomocysteinase (LuxS)"/>
    <property type="match status" value="1"/>
</dbReference>
<dbReference type="HAMAP" id="MF_00091">
    <property type="entry name" value="LuxS"/>
    <property type="match status" value="1"/>
</dbReference>
<dbReference type="InterPro" id="IPR037005">
    <property type="entry name" value="LuxS_sf"/>
</dbReference>
<dbReference type="InterPro" id="IPR011249">
    <property type="entry name" value="Metalloenz_LuxS/M16"/>
</dbReference>
<dbReference type="InterPro" id="IPR003815">
    <property type="entry name" value="S-ribosylhomocysteinase"/>
</dbReference>
<dbReference type="NCBIfam" id="NF002602">
    <property type="entry name" value="PRK02260.1-2"/>
    <property type="match status" value="1"/>
</dbReference>
<dbReference type="PANTHER" id="PTHR35799">
    <property type="entry name" value="S-RIBOSYLHOMOCYSTEINE LYASE"/>
    <property type="match status" value="1"/>
</dbReference>
<dbReference type="PANTHER" id="PTHR35799:SF1">
    <property type="entry name" value="S-RIBOSYLHOMOCYSTEINE LYASE"/>
    <property type="match status" value="1"/>
</dbReference>
<dbReference type="Pfam" id="PF02664">
    <property type="entry name" value="LuxS"/>
    <property type="match status" value="1"/>
</dbReference>
<dbReference type="PIRSF" id="PIRSF006160">
    <property type="entry name" value="AI2"/>
    <property type="match status" value="1"/>
</dbReference>
<dbReference type="PRINTS" id="PR01487">
    <property type="entry name" value="LUXSPROTEIN"/>
</dbReference>
<dbReference type="SUPFAM" id="SSF63411">
    <property type="entry name" value="LuxS/MPP-like metallohydrolase"/>
    <property type="match status" value="1"/>
</dbReference>
<name>LUXS_ECO55</name>
<sequence>MPLLDSFTVDHTRMEAPAVRVAKTMNTPHGDAITVFDLRFCVPNKEVMPERGIHTLEHLFAGFMRNHLNGNGVEIIDISPMGCRTGFYMSLIGTPDEQRVADAWKAAMEDVLKVQDQNQIPELNVYQCGTYQMHSLQEAQDIARSILERDVRINSNEELALPEEKLQELHI</sequence>
<evidence type="ECO:0000255" key="1">
    <source>
        <dbReference type="HAMAP-Rule" id="MF_00091"/>
    </source>
</evidence>
<reference key="1">
    <citation type="journal article" date="2009" name="PLoS Genet.">
        <title>Organised genome dynamics in the Escherichia coli species results in highly diverse adaptive paths.</title>
        <authorList>
            <person name="Touchon M."/>
            <person name="Hoede C."/>
            <person name="Tenaillon O."/>
            <person name="Barbe V."/>
            <person name="Baeriswyl S."/>
            <person name="Bidet P."/>
            <person name="Bingen E."/>
            <person name="Bonacorsi S."/>
            <person name="Bouchier C."/>
            <person name="Bouvet O."/>
            <person name="Calteau A."/>
            <person name="Chiapello H."/>
            <person name="Clermont O."/>
            <person name="Cruveiller S."/>
            <person name="Danchin A."/>
            <person name="Diard M."/>
            <person name="Dossat C."/>
            <person name="Karoui M.E."/>
            <person name="Frapy E."/>
            <person name="Garry L."/>
            <person name="Ghigo J.M."/>
            <person name="Gilles A.M."/>
            <person name="Johnson J."/>
            <person name="Le Bouguenec C."/>
            <person name="Lescat M."/>
            <person name="Mangenot S."/>
            <person name="Martinez-Jehanne V."/>
            <person name="Matic I."/>
            <person name="Nassif X."/>
            <person name="Oztas S."/>
            <person name="Petit M.A."/>
            <person name="Pichon C."/>
            <person name="Rouy Z."/>
            <person name="Ruf C.S."/>
            <person name="Schneider D."/>
            <person name="Tourret J."/>
            <person name="Vacherie B."/>
            <person name="Vallenet D."/>
            <person name="Medigue C."/>
            <person name="Rocha E.P.C."/>
            <person name="Denamur E."/>
        </authorList>
    </citation>
    <scope>NUCLEOTIDE SEQUENCE [LARGE SCALE GENOMIC DNA]</scope>
    <source>
        <strain>55989 / EAEC</strain>
    </source>
</reference>
<proteinExistence type="inferred from homology"/>
<protein>
    <recommendedName>
        <fullName evidence="1">S-ribosylhomocysteine lyase</fullName>
        <ecNumber evidence="1">4.4.1.21</ecNumber>
    </recommendedName>
    <alternativeName>
        <fullName evidence="1">AI-2 synthesis protein</fullName>
    </alternativeName>
    <alternativeName>
        <fullName evidence="1">Autoinducer-2 production protein LuxS</fullName>
    </alternativeName>
</protein>
<feature type="chain" id="PRO_1000118537" description="S-ribosylhomocysteine lyase">
    <location>
        <begin position="1"/>
        <end position="171"/>
    </location>
</feature>
<feature type="binding site" evidence="1">
    <location>
        <position position="54"/>
    </location>
    <ligand>
        <name>Fe cation</name>
        <dbReference type="ChEBI" id="CHEBI:24875"/>
    </ligand>
</feature>
<feature type="binding site" evidence="1">
    <location>
        <position position="58"/>
    </location>
    <ligand>
        <name>Fe cation</name>
        <dbReference type="ChEBI" id="CHEBI:24875"/>
    </ligand>
</feature>
<feature type="binding site" evidence="1">
    <location>
        <position position="128"/>
    </location>
    <ligand>
        <name>Fe cation</name>
        <dbReference type="ChEBI" id="CHEBI:24875"/>
    </ligand>
</feature>
<accession>B7LEA1</accession>
<keyword id="KW-0071">Autoinducer synthesis</keyword>
<keyword id="KW-0408">Iron</keyword>
<keyword id="KW-0456">Lyase</keyword>
<keyword id="KW-0479">Metal-binding</keyword>
<keyword id="KW-0673">Quorum sensing</keyword>
<keyword id="KW-1185">Reference proteome</keyword>
<gene>
    <name evidence="1" type="primary">luxS</name>
    <name type="ordered locus">EC55989_2954</name>
</gene>
<organism>
    <name type="scientific">Escherichia coli (strain 55989 / EAEC)</name>
    <dbReference type="NCBI Taxonomy" id="585055"/>
    <lineage>
        <taxon>Bacteria</taxon>
        <taxon>Pseudomonadati</taxon>
        <taxon>Pseudomonadota</taxon>
        <taxon>Gammaproteobacteria</taxon>
        <taxon>Enterobacterales</taxon>
        <taxon>Enterobacteriaceae</taxon>
        <taxon>Escherichia</taxon>
    </lineage>
</organism>